<keyword id="KW-0067">ATP-binding</keyword>
<keyword id="KW-0963">Cytoplasm</keyword>
<keyword id="KW-0235">DNA replication</keyword>
<keyword id="KW-0238">DNA-binding</keyword>
<keyword id="KW-0446">Lipid-binding</keyword>
<keyword id="KW-0547">Nucleotide-binding</keyword>
<keyword id="KW-1185">Reference proteome</keyword>
<comment type="function">
    <text evidence="1">Plays an essential role in the initiation and regulation of chromosomal replication. ATP-DnaA binds to the origin of replication (oriC) to initiate formation of the DNA replication initiation complex once per cell cycle. Binds the DnaA box (a 9 base pair repeat at the origin) and separates the double-stranded (ds)DNA. Forms a right-handed helical filament on oriC DNA; dsDNA binds to the exterior of the filament while single-stranded (ss)DNA is stabiized in the filament's interior. The ATP-DnaA-oriC complex binds and stabilizes one strand of the AT-rich DNA unwinding element (DUE), permitting loading of DNA polymerase. After initiation quickly degrades to an ADP-DnaA complex that is not apt for DNA replication. Binds acidic phospholipids.</text>
</comment>
<comment type="subunit">
    <text evidence="1">Oligomerizes as a right-handed, spiral filament on DNA at oriC.</text>
</comment>
<comment type="subcellular location">
    <subcellularLocation>
        <location evidence="1">Cytoplasm</location>
    </subcellularLocation>
</comment>
<comment type="domain">
    <text evidence="1">Domain I is involved in oligomerization and binding regulators, domain II is flexibile and of varying length in different bacteria, domain III forms the AAA+ region, while domain IV binds dsDNA.</text>
</comment>
<comment type="similarity">
    <text evidence="1">Belongs to the DnaA family.</text>
</comment>
<reference key="1">
    <citation type="journal article" date="2008" name="Genome Res.">
        <title>Insights from the complete genome sequence of Mycobacterium marinum on the evolution of Mycobacterium tuberculosis.</title>
        <authorList>
            <person name="Stinear T.P."/>
            <person name="Seemann T."/>
            <person name="Harrison P.F."/>
            <person name="Jenkin G.A."/>
            <person name="Davies J.K."/>
            <person name="Johnson P.D."/>
            <person name="Abdellah Z."/>
            <person name="Arrowsmith C."/>
            <person name="Chillingworth T."/>
            <person name="Churcher C."/>
            <person name="Clarke K."/>
            <person name="Cronin A."/>
            <person name="Davis P."/>
            <person name="Goodhead I."/>
            <person name="Holroyd N."/>
            <person name="Jagels K."/>
            <person name="Lord A."/>
            <person name="Moule S."/>
            <person name="Mungall K."/>
            <person name="Norbertczak H."/>
            <person name="Quail M.A."/>
            <person name="Rabbinowitsch E."/>
            <person name="Walker D."/>
            <person name="White B."/>
            <person name="Whitehead S."/>
            <person name="Small P.L."/>
            <person name="Brosch R."/>
            <person name="Ramakrishnan L."/>
            <person name="Fischbach M.A."/>
            <person name="Parkhill J."/>
            <person name="Cole S.T."/>
        </authorList>
    </citation>
    <scope>NUCLEOTIDE SEQUENCE [LARGE SCALE GENOMIC DNA]</scope>
    <source>
        <strain>ATCC BAA-535 / M</strain>
    </source>
</reference>
<name>DNAA_MYCMM</name>
<accession>B2HI46</accession>
<proteinExistence type="inferred from homology"/>
<evidence type="ECO:0000255" key="1">
    <source>
        <dbReference type="HAMAP-Rule" id="MF_00377"/>
    </source>
</evidence>
<evidence type="ECO:0000256" key="2">
    <source>
        <dbReference type="SAM" id="MobiDB-lite"/>
    </source>
</evidence>
<gene>
    <name evidence="1" type="primary">dnaA</name>
    <name type="ordered locus">MMAR_0001</name>
</gene>
<protein>
    <recommendedName>
        <fullName evidence="1">Chromosomal replication initiator protein DnaA</fullName>
    </recommendedName>
</protein>
<organism>
    <name type="scientific">Mycobacterium marinum (strain ATCC BAA-535 / M)</name>
    <dbReference type="NCBI Taxonomy" id="216594"/>
    <lineage>
        <taxon>Bacteria</taxon>
        <taxon>Bacillati</taxon>
        <taxon>Actinomycetota</taxon>
        <taxon>Actinomycetes</taxon>
        <taxon>Mycobacteriales</taxon>
        <taxon>Mycobacteriaceae</taxon>
        <taxon>Mycobacterium</taxon>
        <taxon>Mycobacterium ulcerans group</taxon>
    </lineage>
</organism>
<feature type="chain" id="PRO_1000121998" description="Chromosomal replication initiator protein DnaA">
    <location>
        <begin position="1"/>
        <end position="510"/>
    </location>
</feature>
<feature type="region of interest" description="Domain I, interacts with DnaA modulators" evidence="1">
    <location>
        <begin position="1"/>
        <end position="107"/>
    </location>
</feature>
<feature type="region of interest" description="Domain II" evidence="1">
    <location>
        <begin position="107"/>
        <end position="169"/>
    </location>
</feature>
<feature type="region of interest" description="Disordered" evidence="2">
    <location>
        <begin position="119"/>
        <end position="168"/>
    </location>
</feature>
<feature type="region of interest" description="Domain III, AAA+ region" evidence="1">
    <location>
        <begin position="170"/>
        <end position="386"/>
    </location>
</feature>
<feature type="region of interest" description="Domain IV, binds dsDNA" evidence="1">
    <location>
        <begin position="387"/>
        <end position="510"/>
    </location>
</feature>
<feature type="binding site" evidence="1">
    <location>
        <position position="214"/>
    </location>
    <ligand>
        <name>ATP</name>
        <dbReference type="ChEBI" id="CHEBI:30616"/>
    </ligand>
</feature>
<feature type="binding site" evidence="1">
    <location>
        <position position="216"/>
    </location>
    <ligand>
        <name>ATP</name>
        <dbReference type="ChEBI" id="CHEBI:30616"/>
    </ligand>
</feature>
<feature type="binding site" evidence="1">
    <location>
        <position position="217"/>
    </location>
    <ligand>
        <name>ATP</name>
        <dbReference type="ChEBI" id="CHEBI:30616"/>
    </ligand>
</feature>
<feature type="binding site" evidence="1">
    <location>
        <position position="218"/>
    </location>
    <ligand>
        <name>ATP</name>
        <dbReference type="ChEBI" id="CHEBI:30616"/>
    </ligand>
</feature>
<dbReference type="EMBL" id="CP000854">
    <property type="protein sequence ID" value="ACC38472.1"/>
    <property type="molecule type" value="Genomic_DNA"/>
</dbReference>
<dbReference type="RefSeq" id="WP_012392009.1">
    <property type="nucleotide sequence ID" value="NC_010612.1"/>
</dbReference>
<dbReference type="SMR" id="B2HI46"/>
<dbReference type="STRING" id="216594.MMAR_0001"/>
<dbReference type="KEGG" id="mmi:MMAR_0001"/>
<dbReference type="eggNOG" id="COG0593">
    <property type="taxonomic scope" value="Bacteria"/>
</dbReference>
<dbReference type="HOGENOM" id="CLU_026910_2_0_11"/>
<dbReference type="OrthoDB" id="9807019at2"/>
<dbReference type="Proteomes" id="UP000001190">
    <property type="component" value="Chromosome"/>
</dbReference>
<dbReference type="GO" id="GO:0005737">
    <property type="term" value="C:cytoplasm"/>
    <property type="evidence" value="ECO:0007669"/>
    <property type="project" value="UniProtKB-SubCell"/>
</dbReference>
<dbReference type="GO" id="GO:0005886">
    <property type="term" value="C:plasma membrane"/>
    <property type="evidence" value="ECO:0007669"/>
    <property type="project" value="TreeGrafter"/>
</dbReference>
<dbReference type="GO" id="GO:0005524">
    <property type="term" value="F:ATP binding"/>
    <property type="evidence" value="ECO:0007669"/>
    <property type="project" value="UniProtKB-UniRule"/>
</dbReference>
<dbReference type="GO" id="GO:0016887">
    <property type="term" value="F:ATP hydrolysis activity"/>
    <property type="evidence" value="ECO:0007669"/>
    <property type="project" value="InterPro"/>
</dbReference>
<dbReference type="GO" id="GO:0003688">
    <property type="term" value="F:DNA replication origin binding"/>
    <property type="evidence" value="ECO:0007669"/>
    <property type="project" value="UniProtKB-UniRule"/>
</dbReference>
<dbReference type="GO" id="GO:0008289">
    <property type="term" value="F:lipid binding"/>
    <property type="evidence" value="ECO:0007669"/>
    <property type="project" value="UniProtKB-KW"/>
</dbReference>
<dbReference type="GO" id="GO:0006270">
    <property type="term" value="P:DNA replication initiation"/>
    <property type="evidence" value="ECO:0007669"/>
    <property type="project" value="UniProtKB-UniRule"/>
</dbReference>
<dbReference type="GO" id="GO:0006275">
    <property type="term" value="P:regulation of DNA replication"/>
    <property type="evidence" value="ECO:0007669"/>
    <property type="project" value="UniProtKB-UniRule"/>
</dbReference>
<dbReference type="CDD" id="cd00009">
    <property type="entry name" value="AAA"/>
    <property type="match status" value="1"/>
</dbReference>
<dbReference type="CDD" id="cd06571">
    <property type="entry name" value="Bac_DnaA_C"/>
    <property type="match status" value="1"/>
</dbReference>
<dbReference type="FunFam" id="1.10.1750.10:FF:000002">
    <property type="entry name" value="Chromosomal replication initiator protein DnaA"/>
    <property type="match status" value="1"/>
</dbReference>
<dbReference type="FunFam" id="1.10.8.60:FF:000003">
    <property type="entry name" value="Chromosomal replication initiator protein DnaA"/>
    <property type="match status" value="1"/>
</dbReference>
<dbReference type="FunFam" id="3.40.50.300:FF:000150">
    <property type="entry name" value="Chromosomal replication initiator protein DnaA"/>
    <property type="match status" value="1"/>
</dbReference>
<dbReference type="Gene3D" id="1.10.1750.10">
    <property type="match status" value="1"/>
</dbReference>
<dbReference type="Gene3D" id="1.10.8.60">
    <property type="match status" value="1"/>
</dbReference>
<dbReference type="Gene3D" id="3.30.300.180">
    <property type="match status" value="1"/>
</dbReference>
<dbReference type="Gene3D" id="3.40.50.300">
    <property type="entry name" value="P-loop containing nucleotide triphosphate hydrolases"/>
    <property type="match status" value="1"/>
</dbReference>
<dbReference type="HAMAP" id="MF_00377">
    <property type="entry name" value="DnaA_bact"/>
    <property type="match status" value="1"/>
</dbReference>
<dbReference type="InterPro" id="IPR003593">
    <property type="entry name" value="AAA+_ATPase"/>
</dbReference>
<dbReference type="InterPro" id="IPR001957">
    <property type="entry name" value="Chromosome_initiator_DnaA"/>
</dbReference>
<dbReference type="InterPro" id="IPR020591">
    <property type="entry name" value="Chromosome_initiator_DnaA-like"/>
</dbReference>
<dbReference type="InterPro" id="IPR018312">
    <property type="entry name" value="Chromosome_initiator_DnaA_CS"/>
</dbReference>
<dbReference type="InterPro" id="IPR013159">
    <property type="entry name" value="DnaA_C"/>
</dbReference>
<dbReference type="InterPro" id="IPR013317">
    <property type="entry name" value="DnaA_dom"/>
</dbReference>
<dbReference type="InterPro" id="IPR038454">
    <property type="entry name" value="DnaA_N_sf"/>
</dbReference>
<dbReference type="InterPro" id="IPR027417">
    <property type="entry name" value="P-loop_NTPase"/>
</dbReference>
<dbReference type="InterPro" id="IPR010921">
    <property type="entry name" value="Trp_repressor/repl_initiator"/>
</dbReference>
<dbReference type="NCBIfam" id="TIGR00362">
    <property type="entry name" value="DnaA"/>
    <property type="match status" value="1"/>
</dbReference>
<dbReference type="NCBIfam" id="NF010686">
    <property type="entry name" value="PRK14086.1"/>
    <property type="match status" value="1"/>
</dbReference>
<dbReference type="PANTHER" id="PTHR30050">
    <property type="entry name" value="CHROMOSOMAL REPLICATION INITIATOR PROTEIN DNAA"/>
    <property type="match status" value="1"/>
</dbReference>
<dbReference type="PANTHER" id="PTHR30050:SF2">
    <property type="entry name" value="CHROMOSOMAL REPLICATION INITIATOR PROTEIN DNAA"/>
    <property type="match status" value="1"/>
</dbReference>
<dbReference type="Pfam" id="PF00308">
    <property type="entry name" value="Bac_DnaA"/>
    <property type="match status" value="1"/>
</dbReference>
<dbReference type="Pfam" id="PF08299">
    <property type="entry name" value="Bac_DnaA_C"/>
    <property type="match status" value="1"/>
</dbReference>
<dbReference type="PRINTS" id="PR00051">
    <property type="entry name" value="DNAA"/>
</dbReference>
<dbReference type="SMART" id="SM00382">
    <property type="entry name" value="AAA"/>
    <property type="match status" value="1"/>
</dbReference>
<dbReference type="SMART" id="SM00760">
    <property type="entry name" value="Bac_DnaA_C"/>
    <property type="match status" value="1"/>
</dbReference>
<dbReference type="SUPFAM" id="SSF52540">
    <property type="entry name" value="P-loop containing nucleoside triphosphate hydrolases"/>
    <property type="match status" value="1"/>
</dbReference>
<dbReference type="SUPFAM" id="SSF48295">
    <property type="entry name" value="TrpR-like"/>
    <property type="match status" value="1"/>
</dbReference>
<dbReference type="PROSITE" id="PS01008">
    <property type="entry name" value="DNAA"/>
    <property type="match status" value="1"/>
</dbReference>
<sequence>MTNDPGSGFAAVWNAVVAELNGEPNTDGDAGTGTTLTSPLTPQQRAWLNLVQPLTIVEGFALLSVPSSFVQNEIERHLRTPITAALSRRLGQQIQLGVRIAPPPADDDDDSVAAAVEDPGLEASPETSQEVSDEIDDFGENAPNSRQSWPTHFKKRSTDADTSASAGGTSLNRRYTFDTFVIGASNRFAHAATLAIAEAPARAYNPLFIWGESGLGKTHLLHAAGNYAQRLFPGMRVKYVSTEEFTNDFINSLRDDRKVAFKRSYRDVDVLLVDDIQFIEGKEGIQEEFFHTFNTLHNANKQIVISSDRPPKQLATLEDRLRTRFEWGLITDVQPPELETRIAILRKKAQMERLAVPDDVLELIASSIERNIRELEGALIRVTAFASLNKTPIDKALAEIVLRDLIADAGTMQISAATIMAATAEYFDTTVEELRGPGKTRALAQSRQIAMYLCRELTDLSLPKIGQAFGRDHTTVMYAQRKILSEMAERREVFDHVKELTTRIRQRSKR</sequence>